<organism>
    <name type="scientific">Porphyra purpurea</name>
    <name type="common">Red seaweed</name>
    <name type="synonym">Ulva purpurea</name>
    <dbReference type="NCBI Taxonomy" id="2787"/>
    <lineage>
        <taxon>Eukaryota</taxon>
        <taxon>Rhodophyta</taxon>
        <taxon>Bangiophyceae</taxon>
        <taxon>Bangiales</taxon>
        <taxon>Bangiaceae</taxon>
        <taxon>Porphyra</taxon>
    </lineage>
</organism>
<sequence length="450" mass="52127">MYCSQAITQTSRLPVSNNFYCKKTFFSSVNSNYQNLSQMQSWSSLKVLAFGLPDLHSIPVNLNNSFQEAIVISTINDNNIFADVTNSWIKMHKDKNHYSLFYKEIFKALLTKQIHVIDSPIGSKDIDNKIILIQQYIWKKGLKSPQFNSIARLNKNVDISNISTKFIMEQLSTSPVFVVKNGLNEIILGHPLSRIRRTAFNQIASSLSNLFHQPIATSPISNGLFFFHPDDAIEFKNFVQSKAPEACKDMDIKIQPVGLHVAYKMNRNFSSDIQFRFVPDFKEVGDLIFRHQQAKNLHFHENQYYGKNFFQGQPIYMIQPIIIKHRNGRISIIKFTGANDDREVVFTNLEAANKSWANFIKRTPYLKRLKKPNLLVYNLESFLKDKEVLHKADLTKFIVVTNKSAYITTKESVTLPYHNGLSKHLELNVKPKLFFVKLWIRRLLFTLTYE</sequence>
<geneLocation type="chloroplast"/>
<feature type="chain" id="PRO_0000217407" description="Uncharacterized protein ycf80">
    <location>
        <begin position="1"/>
        <end position="450"/>
    </location>
</feature>
<accession>P51218</accession>
<protein>
    <recommendedName>
        <fullName>Uncharacterized protein ycf80</fullName>
    </recommendedName>
    <alternativeName>
        <fullName>ORF450</fullName>
    </alternativeName>
</protein>
<keyword id="KW-0150">Chloroplast</keyword>
<keyword id="KW-0934">Plastid</keyword>
<proteinExistence type="inferred from homology"/>
<comment type="subcellular location">
    <subcellularLocation>
        <location>Plastid</location>
        <location>Chloroplast</location>
    </subcellularLocation>
</comment>
<comment type="similarity">
    <text evidence="1">Belongs to the ycf80 family.</text>
</comment>
<gene>
    <name type="primary">ycf80</name>
</gene>
<dbReference type="EMBL" id="U38804">
    <property type="protein sequence ID" value="AAC08104.1"/>
    <property type="molecule type" value="Genomic_DNA"/>
</dbReference>
<dbReference type="PIR" id="S73139">
    <property type="entry name" value="S73139"/>
</dbReference>
<dbReference type="GO" id="GO:0009507">
    <property type="term" value="C:chloroplast"/>
    <property type="evidence" value="ECO:0007669"/>
    <property type="project" value="UniProtKB-SubCell"/>
</dbReference>
<dbReference type="GO" id="GO:0015031">
    <property type="term" value="P:protein transport"/>
    <property type="evidence" value="ECO:0007669"/>
    <property type="project" value="InterPro"/>
</dbReference>
<dbReference type="Gene3D" id="3.40.1350.100">
    <property type="match status" value="1"/>
</dbReference>
<dbReference type="InterPro" id="IPR007378">
    <property type="entry name" value="Tic22-like"/>
</dbReference>
<dbReference type="Pfam" id="PF04278">
    <property type="entry name" value="Tic22"/>
    <property type="match status" value="1"/>
</dbReference>
<reference key="1">
    <citation type="journal article" date="1995" name="Plant Mol. Biol. Rep.">
        <title>Complete nucleotide sequence of the Porphyra purpurea chloroplast genome.</title>
        <authorList>
            <person name="Reith M.E."/>
            <person name="Munholland J."/>
        </authorList>
    </citation>
    <scope>NUCLEOTIDE SEQUENCE [LARGE SCALE GENOMIC DNA]</scope>
    <source>
        <strain>Avonport</strain>
    </source>
</reference>
<name>YCF80_PORPU</name>
<evidence type="ECO:0000305" key="1"/>